<sequence length="233" mass="25736">MSTESMIRDVELAEEALPRKTAGPQGSRRRWFLRLFSFLLVAGATTLFCLLHFGVIGPQREEFPKDPSLISPLAQAVRSSSRTPSDKPVAHVVANPQAEGQLQWLNRRANALLANGVEPTDNQLVVPSEGLYLIYSQVLFKGQGCPSNHVLLTHTISRIAVSYQTKVNLLSAIKSPCQRETPEGAEAKPWYEPIYLGGVFQLEKGDRLSAEINLPDYLDFAESGQVYFGIIAL</sequence>
<keyword id="KW-1003">Cell membrane</keyword>
<keyword id="KW-0202">Cytokine</keyword>
<keyword id="KW-1015">Disulfide bond</keyword>
<keyword id="KW-0325">Glycoprotein</keyword>
<keyword id="KW-0449">Lipoprotein</keyword>
<keyword id="KW-0472">Membrane</keyword>
<keyword id="KW-0519">Myristate</keyword>
<keyword id="KW-0597">Phosphoprotein</keyword>
<keyword id="KW-1185">Reference proteome</keyword>
<keyword id="KW-0964">Secreted</keyword>
<keyword id="KW-0735">Signal-anchor</keyword>
<keyword id="KW-0812">Transmembrane</keyword>
<keyword id="KW-1133">Transmembrane helix</keyword>
<organism>
    <name type="scientific">Papio anubis</name>
    <name type="common">Olive baboon</name>
    <dbReference type="NCBI Taxonomy" id="9555"/>
    <lineage>
        <taxon>Eukaryota</taxon>
        <taxon>Metazoa</taxon>
        <taxon>Chordata</taxon>
        <taxon>Craniata</taxon>
        <taxon>Vertebrata</taxon>
        <taxon>Euteleostomi</taxon>
        <taxon>Mammalia</taxon>
        <taxon>Eutheria</taxon>
        <taxon>Euarchontoglires</taxon>
        <taxon>Primates</taxon>
        <taxon>Haplorrhini</taxon>
        <taxon>Catarrhini</taxon>
        <taxon>Cercopithecidae</taxon>
        <taxon>Cercopithecinae</taxon>
        <taxon>Papio</taxon>
    </lineage>
</organism>
<protein>
    <recommendedName>
        <fullName>Tumor necrosis factor</fullName>
    </recommendedName>
    <alternativeName>
        <fullName>Cachectin</fullName>
    </alternativeName>
    <alternativeName>
        <fullName>TNF-alpha</fullName>
    </alternativeName>
    <alternativeName>
        <fullName>Tumor necrosis factor ligand superfamily member 2</fullName>
        <shortName>TNF-a</shortName>
    </alternativeName>
    <component>
        <recommendedName>
            <fullName>Tumor necrosis factor, membrane form</fullName>
        </recommendedName>
        <alternativeName>
            <fullName>N-terminal fragment</fullName>
            <shortName>NTF</shortName>
        </alternativeName>
    </component>
    <component>
        <recommendedName>
            <fullName>Intracellular domain 1</fullName>
            <shortName>ICD1</shortName>
        </recommendedName>
    </component>
    <component>
        <recommendedName>
            <fullName>Intracellular domain 2</fullName>
            <shortName>ICD2</shortName>
        </recommendedName>
    </component>
    <component>
        <recommendedName>
            <fullName>C-domain 1</fullName>
        </recommendedName>
    </component>
    <component>
        <recommendedName>
            <fullName>C-domain 2</fullName>
        </recommendedName>
    </component>
    <component>
        <recommendedName>
            <fullName>Tumor necrosis factor, soluble form</fullName>
        </recommendedName>
    </component>
</protein>
<accession>P59695</accession>
<proteinExistence type="evidence at transcript level"/>
<dbReference type="EMBL" id="AY234222">
    <property type="protein sequence ID" value="AAO85335.1"/>
    <property type="molecule type" value="mRNA"/>
</dbReference>
<dbReference type="RefSeq" id="NP_001106118.1">
    <property type="nucleotide sequence ID" value="NM_001112648.1"/>
</dbReference>
<dbReference type="SMR" id="P59695"/>
<dbReference type="STRING" id="9555.ENSPANP00000011146"/>
<dbReference type="GlyCosmos" id="P59695">
    <property type="glycosylation" value="1 site, No reported glycans"/>
</dbReference>
<dbReference type="GeneID" id="100126739"/>
<dbReference type="CTD" id="7124"/>
<dbReference type="eggNOG" id="ENOG502S4K8">
    <property type="taxonomic scope" value="Eukaryota"/>
</dbReference>
<dbReference type="Proteomes" id="UP000028761">
    <property type="component" value="Unplaced"/>
</dbReference>
<dbReference type="GO" id="GO:0009986">
    <property type="term" value="C:cell surface"/>
    <property type="evidence" value="ECO:0007669"/>
    <property type="project" value="TreeGrafter"/>
</dbReference>
<dbReference type="GO" id="GO:0005615">
    <property type="term" value="C:extracellular space"/>
    <property type="evidence" value="ECO:0007669"/>
    <property type="project" value="UniProtKB-KW"/>
</dbReference>
<dbReference type="GO" id="GO:0005886">
    <property type="term" value="C:plasma membrane"/>
    <property type="evidence" value="ECO:0007669"/>
    <property type="project" value="UniProtKB-SubCell"/>
</dbReference>
<dbReference type="GO" id="GO:0005125">
    <property type="term" value="F:cytokine activity"/>
    <property type="evidence" value="ECO:0007669"/>
    <property type="project" value="UniProtKB-KW"/>
</dbReference>
<dbReference type="GO" id="GO:0005164">
    <property type="term" value="F:tumor necrosis factor receptor binding"/>
    <property type="evidence" value="ECO:0007669"/>
    <property type="project" value="InterPro"/>
</dbReference>
<dbReference type="GO" id="GO:0008625">
    <property type="term" value="P:extrinsic apoptotic signaling pathway via death domain receptors"/>
    <property type="evidence" value="ECO:0007669"/>
    <property type="project" value="TreeGrafter"/>
</dbReference>
<dbReference type="GO" id="GO:0006955">
    <property type="term" value="P:immune response"/>
    <property type="evidence" value="ECO:0007669"/>
    <property type="project" value="InterPro"/>
</dbReference>
<dbReference type="GO" id="GO:0097527">
    <property type="term" value="P:necroptotic signaling pathway"/>
    <property type="evidence" value="ECO:0000250"/>
    <property type="project" value="CAFA"/>
</dbReference>
<dbReference type="GO" id="GO:0043242">
    <property type="term" value="P:negative regulation of protein-containing complex disassembly"/>
    <property type="evidence" value="ECO:0000250"/>
    <property type="project" value="UniProtKB"/>
</dbReference>
<dbReference type="GO" id="GO:0043065">
    <property type="term" value="P:positive regulation of apoptotic process"/>
    <property type="evidence" value="ECO:0000250"/>
    <property type="project" value="UniProtKB"/>
</dbReference>
<dbReference type="GO" id="GO:0043123">
    <property type="term" value="P:positive regulation of canonical NF-kappaB signal transduction"/>
    <property type="evidence" value="ECO:0007669"/>
    <property type="project" value="TreeGrafter"/>
</dbReference>
<dbReference type="GO" id="GO:2001238">
    <property type="term" value="P:positive regulation of extrinsic apoptotic signaling pathway"/>
    <property type="evidence" value="ECO:0007669"/>
    <property type="project" value="TreeGrafter"/>
</dbReference>
<dbReference type="GO" id="GO:0043507">
    <property type="term" value="P:positive regulation of JUN kinase activity"/>
    <property type="evidence" value="ECO:0000250"/>
    <property type="project" value="UniProtKB"/>
</dbReference>
<dbReference type="GO" id="GO:0043406">
    <property type="term" value="P:positive regulation of MAP kinase activity"/>
    <property type="evidence" value="ECO:0000250"/>
    <property type="project" value="UniProtKB"/>
</dbReference>
<dbReference type="GO" id="GO:0051092">
    <property type="term" value="P:positive regulation of NF-kappaB transcription factor activity"/>
    <property type="evidence" value="ECO:0000250"/>
    <property type="project" value="UniProtKB"/>
</dbReference>
<dbReference type="GO" id="GO:0001934">
    <property type="term" value="P:positive regulation of protein phosphorylation"/>
    <property type="evidence" value="ECO:0000250"/>
    <property type="project" value="UniProtKB"/>
</dbReference>
<dbReference type="GO" id="GO:0043243">
    <property type="term" value="P:positive regulation of protein-containing complex disassembly"/>
    <property type="evidence" value="ECO:0000250"/>
    <property type="project" value="UniProtKB"/>
</dbReference>
<dbReference type="GO" id="GO:0045944">
    <property type="term" value="P:positive regulation of transcription by RNA polymerase II"/>
    <property type="evidence" value="ECO:0007669"/>
    <property type="project" value="TreeGrafter"/>
</dbReference>
<dbReference type="GO" id="GO:0065008">
    <property type="term" value="P:regulation of biological quality"/>
    <property type="evidence" value="ECO:0007669"/>
    <property type="project" value="UniProtKB-ARBA"/>
</dbReference>
<dbReference type="GO" id="GO:0050793">
    <property type="term" value="P:regulation of developmental process"/>
    <property type="evidence" value="ECO:0007669"/>
    <property type="project" value="UniProtKB-ARBA"/>
</dbReference>
<dbReference type="GO" id="GO:0051239">
    <property type="term" value="P:regulation of multicellular organismal process"/>
    <property type="evidence" value="ECO:0007669"/>
    <property type="project" value="UniProtKB-ARBA"/>
</dbReference>
<dbReference type="GO" id="GO:0051046">
    <property type="term" value="P:regulation of secretion"/>
    <property type="evidence" value="ECO:0007669"/>
    <property type="project" value="UniProtKB-ARBA"/>
</dbReference>
<dbReference type="GO" id="GO:0033209">
    <property type="term" value="P:tumor necrosis factor-mediated signaling pathway"/>
    <property type="evidence" value="ECO:0007669"/>
    <property type="project" value="TreeGrafter"/>
</dbReference>
<dbReference type="GO" id="GO:0010573">
    <property type="term" value="P:vascular endothelial growth factor production"/>
    <property type="evidence" value="ECO:0000250"/>
    <property type="project" value="UniProtKB"/>
</dbReference>
<dbReference type="CDD" id="cd00184">
    <property type="entry name" value="TNF"/>
    <property type="match status" value="1"/>
</dbReference>
<dbReference type="FunFam" id="2.60.120.40:FF:000007">
    <property type="entry name" value="Tumor necrosis factor"/>
    <property type="match status" value="1"/>
</dbReference>
<dbReference type="Gene3D" id="2.60.120.40">
    <property type="match status" value="1"/>
</dbReference>
<dbReference type="InterPro" id="IPR006053">
    <property type="entry name" value="TNF"/>
</dbReference>
<dbReference type="InterPro" id="IPR002959">
    <property type="entry name" value="TNF_alpha"/>
</dbReference>
<dbReference type="InterPro" id="IPR021184">
    <property type="entry name" value="TNF_CS"/>
</dbReference>
<dbReference type="InterPro" id="IPR006052">
    <property type="entry name" value="TNF_dom"/>
</dbReference>
<dbReference type="InterPro" id="IPR008983">
    <property type="entry name" value="Tumour_necrosis_fac-like_dom"/>
</dbReference>
<dbReference type="PANTHER" id="PTHR11471:SF23">
    <property type="entry name" value="TUMOR NECROSIS FACTOR"/>
    <property type="match status" value="1"/>
</dbReference>
<dbReference type="PANTHER" id="PTHR11471">
    <property type="entry name" value="TUMOR NECROSIS FACTOR FAMILY MEMBER"/>
    <property type="match status" value="1"/>
</dbReference>
<dbReference type="Pfam" id="PF00229">
    <property type="entry name" value="TNF"/>
    <property type="match status" value="1"/>
</dbReference>
<dbReference type="PRINTS" id="PR01234">
    <property type="entry name" value="TNECROSISFCT"/>
</dbReference>
<dbReference type="PRINTS" id="PR01235">
    <property type="entry name" value="TNFALPHA"/>
</dbReference>
<dbReference type="SMART" id="SM00207">
    <property type="entry name" value="TNF"/>
    <property type="match status" value="1"/>
</dbReference>
<dbReference type="SUPFAM" id="SSF49842">
    <property type="entry name" value="TNF-like"/>
    <property type="match status" value="1"/>
</dbReference>
<dbReference type="PROSITE" id="PS00251">
    <property type="entry name" value="THD_1"/>
    <property type="match status" value="1"/>
</dbReference>
<dbReference type="PROSITE" id="PS50049">
    <property type="entry name" value="THD_2"/>
    <property type="match status" value="1"/>
</dbReference>
<evidence type="ECO:0000250" key="1"/>
<evidence type="ECO:0000250" key="2">
    <source>
        <dbReference type="UniProtKB" id="P01375"/>
    </source>
</evidence>
<evidence type="ECO:0000250" key="3">
    <source>
        <dbReference type="UniProtKB" id="P06804"/>
    </source>
</evidence>
<evidence type="ECO:0000255" key="4"/>
<evidence type="ECO:0000255" key="5">
    <source>
        <dbReference type="PROSITE-ProRule" id="PRU01387"/>
    </source>
</evidence>
<evidence type="ECO:0000305" key="6"/>
<reference key="1">
    <citation type="journal article" date="2001" name="Immunogenetics">
        <title>Cloning, sequencing, and homology analysis of nonhuman primate Fas/Fas-ligand and co-stimulatory molecules.</title>
        <authorList>
            <person name="Villinger F.J."/>
            <person name="Bostik P."/>
            <person name="Mayne A.E."/>
            <person name="King C.L."/>
            <person name="Genain C.P."/>
            <person name="Weiss W.R."/>
            <person name="Ansari A.A."/>
        </authorList>
    </citation>
    <scope>NUCLEOTIDE SEQUENCE [MRNA]</scope>
</reference>
<gene>
    <name type="primary">TNF</name>
    <name type="synonym">TNFA</name>
    <name type="synonym">TNFSF2</name>
</gene>
<name>TNFA_PAPAN</name>
<feature type="chain" id="PRO_0000034439" description="Tumor necrosis factor, membrane form">
    <location>
        <begin position="1"/>
        <end position="233"/>
    </location>
</feature>
<feature type="chain" id="PRO_0000417263" description="Intracellular domain 1" evidence="1">
    <location>
        <begin position="1"/>
        <end position="39"/>
    </location>
</feature>
<feature type="chain" id="PRO_0000417264" description="Intracellular domain 2" evidence="1">
    <location>
        <begin position="1"/>
        <end position="35"/>
    </location>
</feature>
<feature type="chain" id="PRO_0000417265" description="C-domain 1" evidence="1">
    <location>
        <begin position="50"/>
        <end status="unknown"/>
    </location>
</feature>
<feature type="chain" id="PRO_0000417266" description="C-domain 2" evidence="1">
    <location>
        <begin position="52"/>
        <end status="unknown"/>
    </location>
</feature>
<feature type="chain" id="PRO_0000034440" description="Tumor necrosis factor, soluble form" evidence="1">
    <location>
        <begin position="77"/>
        <end position="233"/>
    </location>
</feature>
<feature type="topological domain" description="Cytoplasmic" evidence="4">
    <location>
        <begin position="1"/>
        <end position="34"/>
    </location>
</feature>
<feature type="transmembrane region" description="Helical; Signal-anchor for type II membrane protein" evidence="1">
    <location>
        <begin position="35"/>
        <end position="57"/>
    </location>
</feature>
<feature type="topological domain" description="Extracellular" evidence="4">
    <location>
        <begin position="58"/>
        <end position="233"/>
    </location>
</feature>
<feature type="domain" description="THD" evidence="5">
    <location>
        <begin position="88"/>
        <end position="233"/>
    </location>
</feature>
<feature type="site" description="Cleavage; by SPPL2A or SPPL2B" evidence="1">
    <location>
        <begin position="39"/>
        <end position="40"/>
    </location>
</feature>
<feature type="site" description="Cleavage; by SPPL2A or SPPL2B" evidence="1">
    <location>
        <begin position="49"/>
        <end position="50"/>
    </location>
</feature>
<feature type="site" description="Cleavage; by SPPL2A or SPPL2B" evidence="1">
    <location>
        <begin position="51"/>
        <end position="52"/>
    </location>
</feature>
<feature type="site" description="Cleavage; by ADAM17" evidence="1">
    <location>
        <begin position="76"/>
        <end position="77"/>
    </location>
</feature>
<feature type="modified residue" description="Phosphoserine; by CK1" evidence="1">
    <location>
        <position position="2"/>
    </location>
</feature>
<feature type="lipid moiety-binding region" description="N6-myristoyl lysine" evidence="2">
    <location>
        <position position="20"/>
    </location>
</feature>
<feature type="glycosylation site" description="O-linked (GalNAc...) serine; in soluble form" evidence="1">
    <location>
        <position position="80"/>
    </location>
</feature>
<feature type="disulfide bond" evidence="5">
    <location>
        <begin position="145"/>
        <end position="177"/>
    </location>
</feature>
<comment type="function">
    <text evidence="2 3">Cytokine that binds to TNFRSF1A/TNFR1 and TNFRSF1B/TNFBR. It is mainly secreted by macrophages and can induce cell death of certain tumor cell lines. It is potent pyrogen causing fever by direct action or by stimulation of interleukin-1 secretion and is implicated in the induction of cachexia, Under certain conditions it can stimulate cell proliferation and induce cell differentiation (By similarity). Induces insulin resistance in adipocytes via inhibition of insulin-induced IRS1 tyrosine phosphorylation and insulin-induced glucose uptake. Induces GKAP42 protein degradation in adipocytes which is partially responsible for TNF-induced insulin resistance (By similarity). Plays a role in angiogenesis by inducing VEGF production synergistically with IL1B and IL6 (By similarity). Promotes osteoclastogenesis and therefore mediates bone resorption (By similarity).</text>
</comment>
<comment type="function">
    <text evidence="2">The TNF intracellular domain (ICD) form induces IL12 production in dendritic cells.</text>
</comment>
<comment type="subunit">
    <text evidence="1">Homotrimer. Interacts with SPPL2B (By similarity).</text>
</comment>
<comment type="subcellular location">
    <subcellularLocation>
        <location evidence="1">Cell membrane</location>
        <topology evidence="1">Single-pass type II membrane protein</topology>
    </subcellularLocation>
</comment>
<comment type="subcellular location">
    <molecule>Tumor necrosis factor, membrane form</molecule>
    <subcellularLocation>
        <location evidence="1">Membrane</location>
        <topology evidence="1">Single-pass type II membrane protein</topology>
    </subcellularLocation>
</comment>
<comment type="subcellular location">
    <molecule>Tumor necrosis factor, soluble form</molecule>
    <subcellularLocation>
        <location evidence="1">Secreted</location>
    </subcellularLocation>
</comment>
<comment type="subcellular location">
    <molecule>C-domain 1</molecule>
    <subcellularLocation>
        <location evidence="1">Secreted</location>
    </subcellularLocation>
</comment>
<comment type="subcellular location">
    <molecule>C-domain 2</molecule>
    <subcellularLocation>
        <location evidence="1">Secreted</location>
    </subcellularLocation>
</comment>
<comment type="PTM">
    <text evidence="1">The soluble form derives from the membrane form by proteolytic processing. The membrane-bound form is further proteolytically processed by SPPL2A or SPPL2B through regulated intramembrane proteolysis producing TNF intracellular domains (ICD1 and ICD2) released in the cytosol and TNF C-domain 1 and C-domain 2 secreted into the extracellular space (By similarity).</text>
</comment>
<comment type="PTM">
    <text evidence="1">The membrane form, but not the soluble form, is phosphorylated on serine residues. Dephosphorylation of the membrane form occurs by binding to soluble TNFRSF1A/TNFR1 (By similarity).</text>
</comment>
<comment type="PTM">
    <text evidence="1">O-glycosylated; glycans contain galactose, N-acetylgalactosamine and N-acetylneuraminic acid.</text>
</comment>
<comment type="PTM">
    <molecule>Tumor necrosis factor, soluble form</molecule>
    <text evidence="2">The soluble form is demyristoylated by SIRT6, promoting its secretion.</text>
</comment>
<comment type="similarity">
    <text evidence="6">Belongs to the tumor necrosis factor family.</text>
</comment>